<comment type="function">
    <text evidence="1">Pseudokinase which, in complex with CAB39/MO25 (CAB39/MO25alpha or CAB39L/MO25beta), binds to and activates STK11/LKB1. Adopts a closed conformation typical of active protein kinases and binds STK11/LKB1 as a pseudosubstrate, promoting conformational change of STK11/LKB1 in an active conformation (By similarity).</text>
</comment>
<comment type="subunit">
    <text evidence="1">Component of a trimeric complex composed of STK11/LKB1, STRAD (STRADA or STRADB) and CAB39/MO25 (CAB39/MO25alpha or CAB39L/MO25beta): the complex tethers STK11/LKB1 in the cytoplasm and stimulates its catalytic activity.</text>
</comment>
<comment type="subcellular location">
    <subcellularLocation>
        <location evidence="1">Nucleus</location>
    </subcellularLocation>
    <subcellularLocation>
        <location evidence="2">Cytoplasm</location>
    </subcellularLocation>
</comment>
<comment type="alternative products">
    <event type="alternative splicing"/>
    <isoform>
        <id>Q7TNZ6-1</id>
        <name evidence="7">1</name>
        <sequence type="displayed"/>
    </isoform>
    <isoform>
        <id>Q7TNZ6-2</id>
        <name evidence="6">2</name>
        <sequence type="described" ref="VSP_052216"/>
    </isoform>
</comment>
<comment type="tissue specificity">
    <text evidence="5">Expressed in liver.</text>
</comment>
<comment type="domain">
    <text evidence="3">The protein kinase domain is predicted to be catalytically inactive.</text>
</comment>
<comment type="similarity">
    <text evidence="9">Belongs to the protein kinase superfamily. STE Ser/Thr protein kinase family. STE20 subfamily.</text>
</comment>
<feature type="chain" id="PRO_0000260039" description="STE20-related kinase adapter protein alpha">
    <location>
        <begin position="1"/>
        <end position="393"/>
    </location>
</feature>
<feature type="domain" description="Protein kinase" evidence="4">
    <location>
        <begin position="32"/>
        <end position="341"/>
    </location>
</feature>
<feature type="modified residue" description="Phosphoserine" evidence="2">
    <location>
        <position position="2"/>
    </location>
</feature>
<feature type="modified residue" description="Phosphoserine" evidence="2">
    <location>
        <position position="9"/>
    </location>
</feature>
<feature type="modified residue" description="Phosphothreonine; by LKB1" evidence="2">
    <location>
        <position position="381"/>
    </location>
</feature>
<feature type="splice variant" id="VSP_052216" description="In isoform 2." evidence="8">
    <location>
        <begin position="1"/>
        <end position="21"/>
    </location>
</feature>
<feature type="sequence conflict" description="In Ref. 2; AAH81911." evidence="9" ref="2">
    <original>S</original>
    <variation>LA</variation>
    <location>
        <position position="50"/>
    </location>
</feature>
<feature type="sequence conflict" description="In Ref. 2; AAH81911." evidence="9" ref="2">
    <original>A</original>
    <variation>V</variation>
    <location>
        <position position="133"/>
    </location>
</feature>
<name>STRAA_RAT</name>
<reference evidence="9 11" key="1">
    <citation type="submission" date="2003-06" db="EMBL/GenBank/DDBJ databases">
        <title>Cloning and characterization of human, mouse and rat Lyk5 gene.</title>
        <authorList>
            <person name="Shan Y.X."/>
            <person name="Yu L."/>
        </authorList>
    </citation>
    <scope>NUCLEOTIDE SEQUENCE [MRNA] (ISOFORM 1)</scope>
    <source>
        <strain evidence="11">Sprague-Dawley</strain>
    </source>
</reference>
<reference evidence="9 10" key="2">
    <citation type="journal article" date="2004" name="Genome Res.">
        <title>The status, quality, and expansion of the NIH full-length cDNA project: the Mammalian Gene Collection (MGC).</title>
        <authorList>
            <consortium name="The MGC Project Team"/>
        </authorList>
    </citation>
    <scope>NUCLEOTIDE SEQUENCE [LARGE SCALE MRNA] (ISOFORM 2)</scope>
    <source>
        <tissue evidence="10">Testis</tissue>
    </source>
</reference>
<reference evidence="9" key="3">
    <citation type="journal article" date="2003" name="J. Biol.">
        <title>Complexes between the LKB1 tumor suppressor, STRAD alpha/beta and MO25 alpha/beta are upstream kinases in the AMP-activated protein kinase cascade.</title>
        <authorList>
            <person name="Hawley S.A."/>
            <person name="Boudeau J."/>
            <person name="Reid J.L."/>
            <person name="Mustard K.J."/>
            <person name="Udd L."/>
            <person name="Makela T.P."/>
            <person name="Alessi D.R."/>
            <person name="Hardie D.G."/>
        </authorList>
    </citation>
    <scope>TISSUE SPECIFICITY</scope>
    <scope>INTERACTION WITH CAB39 AND STK11</scope>
</reference>
<proteinExistence type="evidence at protein level"/>
<sequence>MSFLANEASSESIASFSKPEIMSSFLPEGGCYELLSVIGKGFEDLMTVNSRYKPTGEYVTVRRINLEACSNEMVTFLQGELHVSKLFSHPNIVPYRATFIADNELWAVTSFMAYGSAKDLIGTHFMDGMSELAIAYILQGVLKALDYIHHMGYVHRSVKASHILISTDGKVYLSGLRSNLSMISHGQRQRAVHDFPKYSIKVLPWLSPEVLQQNLQGYDAKSDIYSVGITACELANGHVPFKDMPATQMLLEKLNGTVPCLLDTSTIPAEELTMSPSRSIANPGLNDSLAAGSLRPANGDSPSHPYHRTFSPHFHNFVEQCLQRNPDARPNASTLLNHSFFKQIKRRASEALPELLRPVTPITSFEGSQSQDHSGILGLVTNLEDLEVDDWEF</sequence>
<keyword id="KW-0025">Alternative splicing</keyword>
<keyword id="KW-0131">Cell cycle</keyword>
<keyword id="KW-0963">Cytoplasm</keyword>
<keyword id="KW-0539">Nucleus</keyword>
<keyword id="KW-0597">Phosphoprotein</keyword>
<keyword id="KW-1185">Reference proteome</keyword>
<evidence type="ECO:0000250" key="1"/>
<evidence type="ECO:0000250" key="2">
    <source>
        <dbReference type="UniProtKB" id="Q7RTN6"/>
    </source>
</evidence>
<evidence type="ECO:0000255" key="3"/>
<evidence type="ECO:0000255" key="4">
    <source>
        <dbReference type="PROSITE-ProRule" id="PRU00159"/>
    </source>
</evidence>
<evidence type="ECO:0000269" key="5">
    <source>
    </source>
</evidence>
<evidence type="ECO:0000269" key="6">
    <source>
    </source>
</evidence>
<evidence type="ECO:0000269" key="7">
    <source ref="1"/>
</evidence>
<evidence type="ECO:0000303" key="8">
    <source>
    </source>
</evidence>
<evidence type="ECO:0000305" key="9"/>
<evidence type="ECO:0000312" key="10">
    <source>
        <dbReference type="EMBL" id="AAH81911.1"/>
    </source>
</evidence>
<evidence type="ECO:0000312" key="11">
    <source>
        <dbReference type="EMBL" id="AAP92801.1"/>
    </source>
</evidence>
<evidence type="ECO:0000312" key="12">
    <source>
        <dbReference type="RGD" id="727905"/>
    </source>
</evidence>
<protein>
    <recommendedName>
        <fullName>STE20-related kinase adapter protein alpha</fullName>
        <shortName>STRAD alpha</shortName>
    </recommendedName>
    <alternativeName>
        <fullName>STE20-related adapter protein</fullName>
    </alternativeName>
</protein>
<gene>
    <name type="primary">Strada</name>
    <name evidence="11 12" type="synonym">Lyk5</name>
    <name type="synonym">Strad</name>
</gene>
<dbReference type="EMBL" id="AY327409">
    <property type="protein sequence ID" value="AAP92801.1"/>
    <property type="molecule type" value="mRNA"/>
</dbReference>
<dbReference type="EMBL" id="BC081911">
    <property type="protein sequence ID" value="AAH81911.1"/>
    <property type="molecule type" value="mRNA"/>
</dbReference>
<dbReference type="RefSeq" id="NP_877972.1">
    <property type="nucleotide sequence ID" value="NM_182820.1"/>
</dbReference>
<dbReference type="SMR" id="Q7TNZ6"/>
<dbReference type="FunCoup" id="Q7TNZ6">
    <property type="interactions" value="3174"/>
</dbReference>
<dbReference type="IntAct" id="Q7TNZ6">
    <property type="interactions" value="2"/>
</dbReference>
<dbReference type="STRING" id="10116.ENSRNOP00000051998"/>
<dbReference type="iPTMnet" id="Q7TNZ6"/>
<dbReference type="PhosphoSitePlus" id="Q7TNZ6"/>
<dbReference type="PaxDb" id="10116-ENSRNOP00000011894"/>
<dbReference type="DNASU" id="303605"/>
<dbReference type="GeneID" id="303605"/>
<dbReference type="KEGG" id="rno:303605"/>
<dbReference type="UCSC" id="RGD:727905">
    <molecule id="Q7TNZ6-1"/>
    <property type="organism name" value="rat"/>
</dbReference>
<dbReference type="AGR" id="RGD:727905"/>
<dbReference type="CTD" id="92335"/>
<dbReference type="RGD" id="727905">
    <property type="gene designation" value="Strada"/>
</dbReference>
<dbReference type="eggNOG" id="KOG0582">
    <property type="taxonomic scope" value="Eukaryota"/>
</dbReference>
<dbReference type="InParanoid" id="Q7TNZ6"/>
<dbReference type="OrthoDB" id="840771at2759"/>
<dbReference type="Reactome" id="R-RNO-380972">
    <property type="pathway name" value="Energy dependent regulation of mTOR by LKB1-AMPK"/>
</dbReference>
<dbReference type="PRO" id="PR:Q7TNZ6"/>
<dbReference type="Proteomes" id="UP000002494">
    <property type="component" value="Unplaced"/>
</dbReference>
<dbReference type="GO" id="GO:0005737">
    <property type="term" value="C:cytoplasm"/>
    <property type="evidence" value="ECO:0000250"/>
    <property type="project" value="UniProtKB"/>
</dbReference>
<dbReference type="GO" id="GO:0140535">
    <property type="term" value="C:intracellular protein-containing complex"/>
    <property type="evidence" value="ECO:0000266"/>
    <property type="project" value="RGD"/>
</dbReference>
<dbReference type="GO" id="GO:0005634">
    <property type="term" value="C:nucleus"/>
    <property type="evidence" value="ECO:0000250"/>
    <property type="project" value="UniProtKB"/>
</dbReference>
<dbReference type="GO" id="GO:0032991">
    <property type="term" value="C:protein-containing complex"/>
    <property type="evidence" value="ECO:0000314"/>
    <property type="project" value="RGD"/>
</dbReference>
<dbReference type="GO" id="GO:1902554">
    <property type="term" value="C:serine/threonine protein kinase complex"/>
    <property type="evidence" value="ECO:0000266"/>
    <property type="project" value="RGD"/>
</dbReference>
<dbReference type="GO" id="GO:0005524">
    <property type="term" value="F:ATP binding"/>
    <property type="evidence" value="ECO:0007669"/>
    <property type="project" value="InterPro"/>
</dbReference>
<dbReference type="GO" id="GO:0019900">
    <property type="term" value="F:kinase binding"/>
    <property type="evidence" value="ECO:0000266"/>
    <property type="project" value="RGD"/>
</dbReference>
<dbReference type="GO" id="GO:0030295">
    <property type="term" value="F:protein kinase activator activity"/>
    <property type="evidence" value="ECO:0000250"/>
    <property type="project" value="UniProtKB"/>
</dbReference>
<dbReference type="GO" id="GO:0043539">
    <property type="term" value="F:protein serine/threonine kinase activator activity"/>
    <property type="evidence" value="ECO:0000266"/>
    <property type="project" value="RGD"/>
</dbReference>
<dbReference type="GO" id="GO:0044877">
    <property type="term" value="F:protein-containing complex binding"/>
    <property type="evidence" value="ECO:0000314"/>
    <property type="project" value="RGD"/>
</dbReference>
<dbReference type="GO" id="GO:0032147">
    <property type="term" value="P:activation of protein kinase activity"/>
    <property type="evidence" value="ECO:0000314"/>
    <property type="project" value="UniProtKB"/>
</dbReference>
<dbReference type="GO" id="GO:0070314">
    <property type="term" value="P:G1 to G0 transition"/>
    <property type="evidence" value="ECO:0000266"/>
    <property type="project" value="RGD"/>
</dbReference>
<dbReference type="GO" id="GO:0006611">
    <property type="term" value="P:protein export from nucleus"/>
    <property type="evidence" value="ECO:0000250"/>
    <property type="project" value="UniProtKB"/>
</dbReference>
<dbReference type="CDD" id="cd08227">
    <property type="entry name" value="PK_STRAD_alpha"/>
    <property type="match status" value="1"/>
</dbReference>
<dbReference type="FunFam" id="3.30.200.20:FF:000130">
    <property type="entry name" value="STE20-related kinase adapter protein alpha"/>
    <property type="match status" value="1"/>
</dbReference>
<dbReference type="FunFam" id="1.10.510.10:FF:000213">
    <property type="entry name" value="STE20-related kinase adapter protein alpha isoform X2"/>
    <property type="match status" value="1"/>
</dbReference>
<dbReference type="Gene3D" id="3.30.200.20">
    <property type="entry name" value="Phosphorylase Kinase, domain 1"/>
    <property type="match status" value="1"/>
</dbReference>
<dbReference type="Gene3D" id="1.10.510.10">
    <property type="entry name" value="Transferase(Phosphotransferase) domain 1"/>
    <property type="match status" value="1"/>
</dbReference>
<dbReference type="InterPro" id="IPR011009">
    <property type="entry name" value="Kinase-like_dom_sf"/>
</dbReference>
<dbReference type="InterPro" id="IPR000719">
    <property type="entry name" value="Prot_kinase_dom"/>
</dbReference>
<dbReference type="InterPro" id="IPR047173">
    <property type="entry name" value="STRAD_A/B-like"/>
</dbReference>
<dbReference type="PANTHER" id="PTHR48014">
    <property type="entry name" value="SERINE/THREONINE-PROTEIN KINASE FRAY2"/>
    <property type="match status" value="1"/>
</dbReference>
<dbReference type="PANTHER" id="PTHR48014:SF20">
    <property type="entry name" value="STE20-RELATED KINASE ADAPTER PROTEIN ALPHA"/>
    <property type="match status" value="1"/>
</dbReference>
<dbReference type="Pfam" id="PF00069">
    <property type="entry name" value="Pkinase"/>
    <property type="match status" value="1"/>
</dbReference>
<dbReference type="SUPFAM" id="SSF56112">
    <property type="entry name" value="Protein kinase-like (PK-like)"/>
    <property type="match status" value="1"/>
</dbReference>
<dbReference type="PROSITE" id="PS50011">
    <property type="entry name" value="PROTEIN_KINASE_DOM"/>
    <property type="match status" value="1"/>
</dbReference>
<organism>
    <name type="scientific">Rattus norvegicus</name>
    <name type="common">Rat</name>
    <dbReference type="NCBI Taxonomy" id="10116"/>
    <lineage>
        <taxon>Eukaryota</taxon>
        <taxon>Metazoa</taxon>
        <taxon>Chordata</taxon>
        <taxon>Craniata</taxon>
        <taxon>Vertebrata</taxon>
        <taxon>Euteleostomi</taxon>
        <taxon>Mammalia</taxon>
        <taxon>Eutheria</taxon>
        <taxon>Euarchontoglires</taxon>
        <taxon>Glires</taxon>
        <taxon>Rodentia</taxon>
        <taxon>Myomorpha</taxon>
        <taxon>Muroidea</taxon>
        <taxon>Muridae</taxon>
        <taxon>Murinae</taxon>
        <taxon>Rattus</taxon>
    </lineage>
</organism>
<accession>Q7TNZ6</accession>
<accession>Q66HD4</accession>